<dbReference type="EC" id="2.1.1.150"/>
<dbReference type="EMBL" id="AB091685">
    <property type="protein sequence ID" value="BAC58012.1"/>
    <property type="molecule type" value="mRNA"/>
</dbReference>
<dbReference type="SMR" id="Q84KK5"/>
<dbReference type="GO" id="GO:0033800">
    <property type="term" value="F:isoflavone 7-O-methyltransferase activity"/>
    <property type="evidence" value="ECO:0000314"/>
    <property type="project" value="UniProtKB"/>
</dbReference>
<dbReference type="GO" id="GO:0046983">
    <property type="term" value="F:protein dimerization activity"/>
    <property type="evidence" value="ECO:0007669"/>
    <property type="project" value="InterPro"/>
</dbReference>
<dbReference type="GO" id="GO:0009717">
    <property type="term" value="P:isoflavonoid biosynthetic process"/>
    <property type="evidence" value="ECO:0000314"/>
    <property type="project" value="UniProtKB"/>
</dbReference>
<dbReference type="GO" id="GO:0032259">
    <property type="term" value="P:methylation"/>
    <property type="evidence" value="ECO:0007669"/>
    <property type="project" value="UniProtKB-KW"/>
</dbReference>
<dbReference type="FunFam" id="1.10.10.10:FF:000213">
    <property type="entry name" value="Coniferyl alcohol 9-O-methyltransferase"/>
    <property type="match status" value="1"/>
</dbReference>
<dbReference type="FunFam" id="3.40.50.150:FF:000057">
    <property type="entry name" value="O-methyltransferase ZRP4"/>
    <property type="match status" value="1"/>
</dbReference>
<dbReference type="Gene3D" id="3.40.50.150">
    <property type="entry name" value="Vaccinia Virus protein VP39"/>
    <property type="match status" value="1"/>
</dbReference>
<dbReference type="Gene3D" id="1.10.10.10">
    <property type="entry name" value="Winged helix-like DNA-binding domain superfamily/Winged helix DNA-binding domain"/>
    <property type="match status" value="1"/>
</dbReference>
<dbReference type="InterPro" id="IPR016461">
    <property type="entry name" value="COMT-like"/>
</dbReference>
<dbReference type="InterPro" id="IPR001077">
    <property type="entry name" value="O_MeTrfase_dom"/>
</dbReference>
<dbReference type="InterPro" id="IPR012967">
    <property type="entry name" value="Plant_O-MeTrfase_dimerisation"/>
</dbReference>
<dbReference type="InterPro" id="IPR029063">
    <property type="entry name" value="SAM-dependent_MTases_sf"/>
</dbReference>
<dbReference type="InterPro" id="IPR036388">
    <property type="entry name" value="WH-like_DNA-bd_sf"/>
</dbReference>
<dbReference type="InterPro" id="IPR036390">
    <property type="entry name" value="WH_DNA-bd_sf"/>
</dbReference>
<dbReference type="PANTHER" id="PTHR11746">
    <property type="entry name" value="O-METHYLTRANSFERASE"/>
    <property type="match status" value="1"/>
</dbReference>
<dbReference type="Pfam" id="PF08100">
    <property type="entry name" value="Dimerisation"/>
    <property type="match status" value="1"/>
</dbReference>
<dbReference type="Pfam" id="PF00891">
    <property type="entry name" value="Methyltransf_2"/>
    <property type="match status" value="1"/>
</dbReference>
<dbReference type="PIRSF" id="PIRSF005739">
    <property type="entry name" value="O-mtase"/>
    <property type="match status" value="1"/>
</dbReference>
<dbReference type="SUPFAM" id="SSF53335">
    <property type="entry name" value="S-adenosyl-L-methionine-dependent methyltransferases"/>
    <property type="match status" value="1"/>
</dbReference>
<dbReference type="SUPFAM" id="SSF46785">
    <property type="entry name" value="Winged helix' DNA-binding domain"/>
    <property type="match status" value="1"/>
</dbReference>
<dbReference type="PROSITE" id="PS51683">
    <property type="entry name" value="SAM_OMT_II"/>
    <property type="match status" value="1"/>
</dbReference>
<comment type="function">
    <text evidence="2">7-O-methyltransferase involved in the biosynthesis of isoformononetin. Can use daidzein as substrate, but not medicarpin or 2,7,4'-trihydroxyisoflavanone.</text>
</comment>
<comment type="catalytic activity">
    <reaction evidence="2">
        <text>a 7-hydroxyisoflavone + S-adenosyl-L-methionine = a 7-methoxyisoflavone + S-adenosyl-L-homocysteine + H(+)</text>
        <dbReference type="Rhea" id="RHEA:17933"/>
        <dbReference type="ChEBI" id="CHEBI:15378"/>
        <dbReference type="ChEBI" id="CHEBI:55465"/>
        <dbReference type="ChEBI" id="CHEBI:57856"/>
        <dbReference type="ChEBI" id="CHEBI:59789"/>
        <dbReference type="ChEBI" id="CHEBI:140356"/>
        <dbReference type="EC" id="2.1.1.150"/>
    </reaction>
</comment>
<comment type="similarity">
    <text evidence="1">Belongs to the class I-like SAM-binding methyltransferase superfamily. Cation-independent O-methyltransferase family. COMT subfamily.</text>
</comment>
<protein>
    <recommendedName>
        <fullName>Isoflavone 7-O-methyltransferase</fullName>
        <ecNumber>2.1.1.150</ecNumber>
    </recommendedName>
    <alternativeName>
        <fullName>Daidzein 7-O-methyltransferase</fullName>
    </alternativeName>
</protein>
<sequence length="357" mass="40274">MASSINGRKPSEIFQGQALLYRHIYAFIDSMCLKWIVELDIPNIIHNHGKPITVSELVSILKVPQTKAGNVQRIMRYMAHNGFFERVRIQEEQEENEAYALTAASELLVKGSELCLAPMVECVLDPTLSGSYHQLKKWIYEEDLTLFGVSLGSHFWEFLNENPEYNKSFNDAMASDSQMINLALRDCNSGFEGVESIVDVGGGIGTTAKIICDTFPNLKCIVFDRPKVVENLSGTNNLSYVGGDMFQSVPKADAVLLKWILHNWTDNDCRRILEKCKEAVSSDGEKGKVIIIEMVINENQDEHEITGTKLLMDVNMACLNGKERSEEEWKKLFIEAGFRDYKISPLTGFLSLIEVYP</sequence>
<accession>Q84KK5</accession>
<proteinExistence type="evidence at protein level"/>
<name>D7OMT_GLYEC</name>
<evidence type="ECO:0000255" key="1">
    <source>
        <dbReference type="PROSITE-ProRule" id="PRU01020"/>
    </source>
</evidence>
<evidence type="ECO:0000269" key="2">
    <source>
    </source>
</evidence>
<keyword id="KW-0489">Methyltransferase</keyword>
<keyword id="KW-0949">S-adenosyl-L-methionine</keyword>
<keyword id="KW-0808">Transferase</keyword>
<gene>
    <name type="primary">D7OMT</name>
</gene>
<feature type="chain" id="PRO_0000411980" description="Isoflavone 7-O-methyltransferase">
    <location>
        <begin position="1"/>
        <end position="357"/>
    </location>
</feature>
<feature type="active site" description="Proton acceptor" evidence="1">
    <location>
        <position position="262"/>
    </location>
</feature>
<feature type="binding site" evidence="1">
    <location>
        <begin position="200"/>
        <end position="203"/>
    </location>
    <ligand>
        <name>S-adenosyl-L-methionine</name>
        <dbReference type="ChEBI" id="CHEBI:59789"/>
    </ligand>
</feature>
<feature type="binding site" evidence="1">
    <location>
        <begin position="224"/>
        <end position="225"/>
    </location>
    <ligand>
        <name>S-adenosyl-L-methionine</name>
        <dbReference type="ChEBI" id="CHEBI:59789"/>
    </ligand>
</feature>
<feature type="binding site" evidence="1">
    <location>
        <position position="224"/>
    </location>
    <ligand>
        <name>S-adenosyl-L-methionine</name>
        <dbReference type="ChEBI" id="CHEBI:59789"/>
    </ligand>
</feature>
<feature type="binding site" evidence="1">
    <location>
        <begin position="244"/>
        <end position="245"/>
    </location>
    <ligand>
        <name>S-adenosyl-L-methionine</name>
        <dbReference type="ChEBI" id="CHEBI:59789"/>
    </ligand>
</feature>
<feature type="binding site" evidence="1">
    <location>
        <position position="258"/>
    </location>
    <ligand>
        <name>S-adenosyl-L-methionine</name>
        <dbReference type="ChEBI" id="CHEBI:59789"/>
    </ligand>
</feature>
<reference key="1">
    <citation type="journal article" date="2003" name="Plant Cell Physiol.">
        <title>cDNA cloning and biochemical characterization of S-adenosyl-L-methionine: 2,7,4'-trihydroxyisoflavanone 4'-O-methyltransferase, a critical enzyme of the legume isoflavonoid phytoalexin pathway.</title>
        <authorList>
            <person name="Akashi T."/>
            <person name="Sawada Y."/>
            <person name="Shimada N."/>
            <person name="Sakurai N."/>
            <person name="Aoki T."/>
            <person name="Ayabe S."/>
        </authorList>
    </citation>
    <scope>NUCLEOTIDE SEQUENCE [MRNA]</scope>
    <scope>FUNCTION</scope>
    <scope>CATALYTIC ACTIVITY</scope>
</reference>
<organism>
    <name type="scientific">Glycyrrhiza echinata</name>
    <name type="common">Licorice</name>
    <dbReference type="NCBI Taxonomy" id="46348"/>
    <lineage>
        <taxon>Eukaryota</taxon>
        <taxon>Viridiplantae</taxon>
        <taxon>Streptophyta</taxon>
        <taxon>Embryophyta</taxon>
        <taxon>Tracheophyta</taxon>
        <taxon>Spermatophyta</taxon>
        <taxon>Magnoliopsida</taxon>
        <taxon>eudicotyledons</taxon>
        <taxon>Gunneridae</taxon>
        <taxon>Pentapetalae</taxon>
        <taxon>rosids</taxon>
        <taxon>fabids</taxon>
        <taxon>Fabales</taxon>
        <taxon>Fabaceae</taxon>
        <taxon>Papilionoideae</taxon>
        <taxon>50 kb inversion clade</taxon>
        <taxon>NPAAA clade</taxon>
        <taxon>Hologalegina</taxon>
        <taxon>IRL clade</taxon>
        <taxon>Galegeae</taxon>
        <taxon>Glycyrrhiza</taxon>
    </lineage>
</organism>